<dbReference type="EC" id="5.6.2.2" evidence="1"/>
<dbReference type="EMBL" id="AE000516">
    <property type="protein sequence ID" value="AAK44229.1"/>
    <property type="molecule type" value="Genomic_DNA"/>
</dbReference>
<dbReference type="PIR" id="D70698">
    <property type="entry name" value="D70698"/>
</dbReference>
<dbReference type="SMR" id="P9WG46"/>
<dbReference type="KEGG" id="mtc:MT0006"/>
<dbReference type="HOGENOM" id="CLU_002977_6_1_11"/>
<dbReference type="Proteomes" id="UP000001020">
    <property type="component" value="Chromosome"/>
</dbReference>
<dbReference type="GO" id="GO:0005694">
    <property type="term" value="C:chromosome"/>
    <property type="evidence" value="ECO:0007669"/>
    <property type="project" value="InterPro"/>
</dbReference>
<dbReference type="GO" id="GO:0005737">
    <property type="term" value="C:cytoplasm"/>
    <property type="evidence" value="ECO:0007669"/>
    <property type="project" value="UniProtKB-SubCell"/>
</dbReference>
<dbReference type="GO" id="GO:0009330">
    <property type="term" value="C:DNA topoisomerase type II (double strand cut, ATP-hydrolyzing) complex"/>
    <property type="evidence" value="ECO:0007669"/>
    <property type="project" value="TreeGrafter"/>
</dbReference>
<dbReference type="GO" id="GO:0005524">
    <property type="term" value="F:ATP binding"/>
    <property type="evidence" value="ECO:0007669"/>
    <property type="project" value="UniProtKB-UniRule"/>
</dbReference>
<dbReference type="GO" id="GO:0003677">
    <property type="term" value="F:DNA binding"/>
    <property type="evidence" value="ECO:0007669"/>
    <property type="project" value="UniProtKB-UniRule"/>
</dbReference>
<dbReference type="GO" id="GO:0034335">
    <property type="term" value="F:DNA negative supercoiling activity"/>
    <property type="evidence" value="ECO:0007669"/>
    <property type="project" value="UniProtKB-ARBA"/>
</dbReference>
<dbReference type="GO" id="GO:0006265">
    <property type="term" value="P:DNA topological change"/>
    <property type="evidence" value="ECO:0007669"/>
    <property type="project" value="UniProtKB-UniRule"/>
</dbReference>
<dbReference type="GO" id="GO:0006261">
    <property type="term" value="P:DNA-templated DNA replication"/>
    <property type="evidence" value="ECO:0007669"/>
    <property type="project" value="UniProtKB-UniRule"/>
</dbReference>
<dbReference type="GO" id="GO:0046677">
    <property type="term" value="P:response to antibiotic"/>
    <property type="evidence" value="ECO:0007669"/>
    <property type="project" value="UniProtKB-KW"/>
</dbReference>
<dbReference type="CDD" id="cd00187">
    <property type="entry name" value="TOP4c"/>
    <property type="match status" value="1"/>
</dbReference>
<dbReference type="FunFam" id="1.10.268.10:FF:000001">
    <property type="entry name" value="DNA gyrase subunit A"/>
    <property type="match status" value="1"/>
</dbReference>
<dbReference type="FunFam" id="2.120.10.90:FF:000001">
    <property type="entry name" value="DNA gyrase subunit A"/>
    <property type="match status" value="1"/>
</dbReference>
<dbReference type="FunFam" id="3.90.199.10:FF:000010">
    <property type="entry name" value="DNA gyrase subunit A"/>
    <property type="match status" value="1"/>
</dbReference>
<dbReference type="FunFam" id="3.30.1360.40:FF:000008">
    <property type="entry name" value="DNA topoisomerase (ATP-hydrolyzing)"/>
    <property type="match status" value="1"/>
</dbReference>
<dbReference type="Gene3D" id="3.30.1360.40">
    <property type="match status" value="1"/>
</dbReference>
<dbReference type="Gene3D" id="2.120.10.90">
    <property type="entry name" value="DNA gyrase/topoisomerase IV, subunit A, C-terminal"/>
    <property type="match status" value="1"/>
</dbReference>
<dbReference type="Gene3D" id="3.90.199.10">
    <property type="entry name" value="Topoisomerase II, domain 5"/>
    <property type="match status" value="1"/>
</dbReference>
<dbReference type="Gene3D" id="1.10.268.10">
    <property type="entry name" value="Topoisomerase, domain 3"/>
    <property type="match status" value="1"/>
</dbReference>
<dbReference type="HAMAP" id="MF_01897">
    <property type="entry name" value="GyrA"/>
    <property type="match status" value="1"/>
</dbReference>
<dbReference type="InterPro" id="IPR005743">
    <property type="entry name" value="GyrA"/>
</dbReference>
<dbReference type="InterPro" id="IPR006691">
    <property type="entry name" value="GyrA/parC_rep"/>
</dbReference>
<dbReference type="InterPro" id="IPR035516">
    <property type="entry name" value="Gyrase/topoIV_suA_C"/>
</dbReference>
<dbReference type="InterPro" id="IPR013760">
    <property type="entry name" value="Topo_IIA-like_dom_sf"/>
</dbReference>
<dbReference type="InterPro" id="IPR013758">
    <property type="entry name" value="Topo_IIA_A/C_ab"/>
</dbReference>
<dbReference type="InterPro" id="IPR013757">
    <property type="entry name" value="Topo_IIA_A_a_sf"/>
</dbReference>
<dbReference type="InterPro" id="IPR002205">
    <property type="entry name" value="Topo_IIA_dom_A"/>
</dbReference>
<dbReference type="InterPro" id="IPR050220">
    <property type="entry name" value="Type_II_DNA_Topoisomerases"/>
</dbReference>
<dbReference type="NCBIfam" id="TIGR01063">
    <property type="entry name" value="gyrA"/>
    <property type="match status" value="1"/>
</dbReference>
<dbReference type="NCBIfam" id="NF004043">
    <property type="entry name" value="PRK05560.1"/>
    <property type="match status" value="1"/>
</dbReference>
<dbReference type="NCBIfam" id="NF004044">
    <property type="entry name" value="PRK05561.1"/>
    <property type="match status" value="1"/>
</dbReference>
<dbReference type="PANTHER" id="PTHR43493:SF5">
    <property type="entry name" value="DNA GYRASE SUBUNIT A, CHLOROPLASTIC_MITOCHONDRIAL"/>
    <property type="match status" value="1"/>
</dbReference>
<dbReference type="PANTHER" id="PTHR43493">
    <property type="entry name" value="DNA GYRASE/TOPOISOMERASE SUBUNIT A"/>
    <property type="match status" value="1"/>
</dbReference>
<dbReference type="Pfam" id="PF03989">
    <property type="entry name" value="DNA_gyraseA_C"/>
    <property type="match status" value="6"/>
</dbReference>
<dbReference type="Pfam" id="PF00521">
    <property type="entry name" value="DNA_topoisoIV"/>
    <property type="match status" value="1"/>
</dbReference>
<dbReference type="SMART" id="SM00434">
    <property type="entry name" value="TOP4c"/>
    <property type="match status" value="1"/>
</dbReference>
<dbReference type="SUPFAM" id="SSF101904">
    <property type="entry name" value="GyrA/ParC C-terminal domain-like"/>
    <property type="match status" value="1"/>
</dbReference>
<dbReference type="SUPFAM" id="SSF56719">
    <property type="entry name" value="Type II DNA topoisomerase"/>
    <property type="match status" value="1"/>
</dbReference>
<dbReference type="PROSITE" id="PS52040">
    <property type="entry name" value="TOPO_IIA"/>
    <property type="match status" value="1"/>
</dbReference>
<accession>P9WG46</accession>
<accession>J9VB15</accession>
<accession>P71574</accession>
<accession>P97136</accession>
<accession>Q07702</accession>
<proteinExistence type="inferred from homology"/>
<sequence length="838" mass="92331">MTDTTLPPDDSLDRIEPVDIQQEMQRSYIDYAMSVIVGRALPEVRDGLKPVHRRVLYAMFDSGFRPDRSHAKSARSVAETMGNYHPHGDASIYDSLVRMAQPWSLRYPLVDGQGNFGSPGNDPPAAMRYTEARLTPLAMEMLREIDEETVDFIPNYDGRVQEPTVLPSRFPNLLANGSGGIAVGMATNIPPHNLRELADAVFWALENHDADEEETLAAVMGRVKGPDFPTAGLIVGSQGTADAYKTGRGSIRMRGVVEVEEDSRGRTSLVITELPYQVNHDNFITSIAEQVRDGKLAGISNIEDQSSDRVGLRIVIEIKRDAVAKVVINNLYKHTQLQTSFGANMLAIVDGVPRTLRLDQLIRYYVDHQLDVIVRRTTYRLRKANERAHILRGLVKALDALDEVIALIRASETVDIARAGLIELLDIDEIQAQAILDMQLRRLAALERQRIIDDLAKIEAEIADLEDILAKPERQRGIVRDELAEIVDRHGDDRRTRIIAADGDVSDEDLIAREDVVVTITETGYAKRTKTDLYRSQKRGGKGVQGAGLKQDDIVAHFFVCSTHDLILFFTTQGRVYRAKAYDLPEASRTARGQHVANLLAFQPEERIAQVIQIRGYTDAPYLVLATRNGLVKKSKLTDFDSNRSGGIVAVNLRDNDELVGAVLCSADDDLLLVSANGQSIRFSATDEALRPMGRATSGVQGMRFNIDDRLLSLNVVREGTYLLVATSGGYAKRTAIEEYPVQGRGGKGVLTVMYDRRRGRLVGALIVDDDSELYAVTSGGGVIRTAARQVRKAGRQTKGVRLMNLGEGDTLLAIARNAEESGDDNAVDANGADQTGN</sequence>
<keyword id="KW-0046">Antibiotic resistance</keyword>
<keyword id="KW-0067">ATP-binding</keyword>
<keyword id="KW-0963">Cytoplasm</keyword>
<keyword id="KW-0238">DNA-binding</keyword>
<keyword id="KW-0413">Isomerase</keyword>
<keyword id="KW-0547">Nucleotide-binding</keyword>
<keyword id="KW-1185">Reference proteome</keyword>
<keyword id="KW-0799">Topoisomerase</keyword>
<reference key="1">
    <citation type="journal article" date="2002" name="J. Bacteriol.">
        <title>Whole-genome comparison of Mycobacterium tuberculosis clinical and laboratory strains.</title>
        <authorList>
            <person name="Fleischmann R.D."/>
            <person name="Alland D."/>
            <person name="Eisen J.A."/>
            <person name="Carpenter L."/>
            <person name="White O."/>
            <person name="Peterson J.D."/>
            <person name="DeBoy R.T."/>
            <person name="Dodson R.J."/>
            <person name="Gwinn M.L."/>
            <person name="Haft D.H."/>
            <person name="Hickey E.K."/>
            <person name="Kolonay J.F."/>
            <person name="Nelson W.C."/>
            <person name="Umayam L.A."/>
            <person name="Ermolaeva M.D."/>
            <person name="Salzberg S.L."/>
            <person name="Delcher A."/>
            <person name="Utterback T.R."/>
            <person name="Weidman J.F."/>
            <person name="Khouri H.M."/>
            <person name="Gill J."/>
            <person name="Mikula A."/>
            <person name="Bishai W."/>
            <person name="Jacobs W.R. Jr."/>
            <person name="Venter J.C."/>
            <person name="Fraser C.M."/>
        </authorList>
    </citation>
    <scope>NUCLEOTIDE SEQUENCE [LARGE SCALE GENOMIC DNA]</scope>
    <source>
        <strain>CDC 1551 / Oshkosh</strain>
    </source>
</reference>
<organism>
    <name type="scientific">Mycobacterium tuberculosis (strain CDC 1551 / Oshkosh)</name>
    <dbReference type="NCBI Taxonomy" id="83331"/>
    <lineage>
        <taxon>Bacteria</taxon>
        <taxon>Bacillati</taxon>
        <taxon>Actinomycetota</taxon>
        <taxon>Actinomycetes</taxon>
        <taxon>Mycobacteriales</taxon>
        <taxon>Mycobacteriaceae</taxon>
        <taxon>Mycobacterium</taxon>
        <taxon>Mycobacterium tuberculosis complex</taxon>
    </lineage>
</organism>
<evidence type="ECO:0000255" key="1">
    <source>
        <dbReference type="HAMAP-Rule" id="MF_01897"/>
    </source>
</evidence>
<evidence type="ECO:0000255" key="2">
    <source>
        <dbReference type="PROSITE-ProRule" id="PRU01384"/>
    </source>
</evidence>
<name>GYRA_MYCTO</name>
<gene>
    <name evidence="1" type="primary">gyrA</name>
    <name type="ordered locus">MT0006</name>
</gene>
<protein>
    <recommendedName>
        <fullName evidence="1">DNA gyrase subunit A</fullName>
        <ecNumber evidence="1">5.6.2.2</ecNumber>
    </recommendedName>
</protein>
<comment type="function">
    <text evidence="1">A type II topoisomerase that negatively supercoils closed circular double-stranded (ds) DNA in an ATP-dependent manner to modulate DNA topology and maintain chromosomes in an underwound state. Negative supercoiling favors strand separation, and DNA replication, transcription, recombination and repair, all of which involve strand separation. Also able to catalyze the interconversion of other topological isomers of dsDNA rings, including catenanes and knotted rings. Type II topoisomerases break and join 2 DNA strands simultaneously in an ATP-dependent manner.</text>
</comment>
<comment type="catalytic activity">
    <reaction evidence="1">
        <text>ATP-dependent breakage, passage and rejoining of double-stranded DNA.</text>
        <dbReference type="EC" id="5.6.2.2"/>
    </reaction>
</comment>
<comment type="subunit">
    <text evidence="1">Heterotetramer, composed of two GyrA and two GyrB chains. In the heterotetramer, GyrA contains the active site tyrosine that forms a transient covalent intermediate with DNA, while GyrB binds cofactors and catalyzes ATP hydrolysis.</text>
</comment>
<comment type="subcellular location">
    <subcellularLocation>
        <location evidence="1">Cytoplasm</location>
    </subcellularLocation>
</comment>
<comment type="miscellaneous">
    <text evidence="1">Few gyrases are as efficient as E.coli at forming negative supercoils. Not all organisms have 2 type II topoisomerases; in organisms with a single type II topoisomerase this enzyme also has to decatenate newly replicated chromosomes.</text>
</comment>
<comment type="similarity">
    <text evidence="1">Belongs to the type II topoisomerase GyrA/ParC subunit family.</text>
</comment>
<feature type="chain" id="PRO_0000428425" description="DNA gyrase subunit A">
    <location>
        <begin position="1"/>
        <end position="838"/>
    </location>
</feature>
<feature type="domain" description="Topo IIA-type catalytic" evidence="2">
    <location>
        <begin position="41"/>
        <end position="510"/>
    </location>
</feature>
<feature type="short sequence motif" description="GyrA-box" evidence="1">
    <location>
        <begin position="537"/>
        <end position="543"/>
    </location>
</feature>
<feature type="active site" description="O-(5'-phospho-DNA)-tyrosine intermediate" evidence="1">
    <location>
        <position position="129"/>
    </location>
</feature>